<proteinExistence type="inferred from homology"/>
<sequence length="326" mass="36016">MTISTLSSSYGNAQDVPAEDSDRHGSIEPGSEKAANAVERSGIPILEVKNLCHRYPHLDANTLEEINLKVYKGERVAVLGANGAGKSTLFKHLNGILKPLSGEVLVKGEKITKKNVRMCRETVGIVFQDPDDQVLAPSVEEDIAFGPINMGLSSEEVEKRVKEALKMVGLEGFEERAPHHLSGGQKKLVAIAGILAMRPEVIVLDEPTAGLDPLSSARFLELIMKMNKELGITLLLSTHDVDVVPYFAERVFVLHHGKLEADGIPEEIFSDPELLRKAHLRLPRIAEIFEMLQQEGVDINIKITAEKARDEILRVMDSRFQTFRMG</sequence>
<evidence type="ECO:0000250" key="1"/>
<evidence type="ECO:0000255" key="2">
    <source>
        <dbReference type="PROSITE-ProRule" id="PRU00434"/>
    </source>
</evidence>
<evidence type="ECO:0000256" key="3">
    <source>
        <dbReference type="SAM" id="MobiDB-lite"/>
    </source>
</evidence>
<evidence type="ECO:0000305" key="4"/>
<accession>Q8TIX0</accession>
<protein>
    <recommendedName>
        <fullName>Putative ABC transporter ATP-binding protein MA_4020</fullName>
        <ecNumber>7.-.-.-</ecNumber>
    </recommendedName>
</protein>
<feature type="chain" id="PRO_0000092133" description="Putative ABC transporter ATP-binding protein MA_4020">
    <location>
        <begin position="1"/>
        <end position="326"/>
    </location>
</feature>
<feature type="domain" description="ABC transporter" evidence="2">
    <location>
        <begin position="46"/>
        <end position="281"/>
    </location>
</feature>
<feature type="region of interest" description="Disordered" evidence="3">
    <location>
        <begin position="1"/>
        <end position="34"/>
    </location>
</feature>
<feature type="compositionally biased region" description="Polar residues" evidence="3">
    <location>
        <begin position="1"/>
        <end position="12"/>
    </location>
</feature>
<feature type="binding site" evidence="2">
    <location>
        <begin position="80"/>
        <end position="87"/>
    </location>
    <ligand>
        <name>ATP</name>
        <dbReference type="ChEBI" id="CHEBI:30616"/>
    </ligand>
</feature>
<comment type="function">
    <text evidence="1">Probably part of an ABC transporter complex. Responsible for energy coupling to the transport system (By similarity).</text>
</comment>
<comment type="subcellular location">
    <subcellularLocation>
        <location evidence="1">Cell membrane</location>
        <topology evidence="1">Peripheral membrane protein</topology>
    </subcellularLocation>
</comment>
<comment type="similarity">
    <text evidence="4">Belongs to the ABC transporter superfamily.</text>
</comment>
<keyword id="KW-0067">ATP-binding</keyword>
<keyword id="KW-1003">Cell membrane</keyword>
<keyword id="KW-0472">Membrane</keyword>
<keyword id="KW-0547">Nucleotide-binding</keyword>
<keyword id="KW-1185">Reference proteome</keyword>
<keyword id="KW-1278">Translocase</keyword>
<keyword id="KW-0813">Transport</keyword>
<reference key="1">
    <citation type="journal article" date="2002" name="Genome Res.">
        <title>The genome of Methanosarcina acetivorans reveals extensive metabolic and physiological diversity.</title>
        <authorList>
            <person name="Galagan J.E."/>
            <person name="Nusbaum C."/>
            <person name="Roy A."/>
            <person name="Endrizzi M.G."/>
            <person name="Macdonald P."/>
            <person name="FitzHugh W."/>
            <person name="Calvo S."/>
            <person name="Engels R."/>
            <person name="Smirnov S."/>
            <person name="Atnoor D."/>
            <person name="Brown A."/>
            <person name="Allen N."/>
            <person name="Naylor J."/>
            <person name="Stange-Thomann N."/>
            <person name="DeArellano K."/>
            <person name="Johnson R."/>
            <person name="Linton L."/>
            <person name="McEwan P."/>
            <person name="McKernan K."/>
            <person name="Talamas J."/>
            <person name="Tirrell A."/>
            <person name="Ye W."/>
            <person name="Zimmer A."/>
            <person name="Barber R.D."/>
            <person name="Cann I."/>
            <person name="Graham D.E."/>
            <person name="Grahame D.A."/>
            <person name="Guss A.M."/>
            <person name="Hedderich R."/>
            <person name="Ingram-Smith C."/>
            <person name="Kuettner H.C."/>
            <person name="Krzycki J.A."/>
            <person name="Leigh J.A."/>
            <person name="Li W."/>
            <person name="Liu J."/>
            <person name="Mukhopadhyay B."/>
            <person name="Reeve J.N."/>
            <person name="Smith K."/>
            <person name="Springer T.A."/>
            <person name="Umayam L.A."/>
            <person name="White O."/>
            <person name="White R.H."/>
            <person name="de Macario E.C."/>
            <person name="Ferry J.G."/>
            <person name="Jarrell K.F."/>
            <person name="Jing H."/>
            <person name="Macario A.J.L."/>
            <person name="Paulsen I.T."/>
            <person name="Pritchett M."/>
            <person name="Sowers K.R."/>
            <person name="Swanson R.V."/>
            <person name="Zinder S.H."/>
            <person name="Lander E."/>
            <person name="Metcalf W.W."/>
            <person name="Birren B."/>
        </authorList>
    </citation>
    <scope>NUCLEOTIDE SEQUENCE [LARGE SCALE GENOMIC DNA]</scope>
    <source>
        <strain>ATCC 35395 / DSM 2834 / JCM 12185 / C2A</strain>
    </source>
</reference>
<dbReference type="EC" id="7.-.-.-"/>
<dbReference type="EMBL" id="AE010299">
    <property type="protein sequence ID" value="AAM07369.1"/>
    <property type="molecule type" value="Genomic_DNA"/>
</dbReference>
<dbReference type="RefSeq" id="WP_011023914.1">
    <property type="nucleotide sequence ID" value="NC_003552.1"/>
</dbReference>
<dbReference type="SMR" id="Q8TIX0"/>
<dbReference type="FunCoup" id="Q8TIX0">
    <property type="interactions" value="55"/>
</dbReference>
<dbReference type="STRING" id="188937.MA_4020"/>
<dbReference type="EnsemblBacteria" id="AAM07369">
    <property type="protein sequence ID" value="AAM07369"/>
    <property type="gene ID" value="MA_4020"/>
</dbReference>
<dbReference type="GeneID" id="1475914"/>
<dbReference type="KEGG" id="mac:MA_4020"/>
<dbReference type="HOGENOM" id="CLU_000604_1_22_2"/>
<dbReference type="InParanoid" id="Q8TIX0"/>
<dbReference type="OrthoDB" id="18209at2157"/>
<dbReference type="PhylomeDB" id="Q8TIX0"/>
<dbReference type="Proteomes" id="UP000002487">
    <property type="component" value="Chromosome"/>
</dbReference>
<dbReference type="GO" id="GO:0043190">
    <property type="term" value="C:ATP-binding cassette (ABC) transporter complex"/>
    <property type="evidence" value="ECO:0000318"/>
    <property type="project" value="GO_Central"/>
</dbReference>
<dbReference type="GO" id="GO:0005524">
    <property type="term" value="F:ATP binding"/>
    <property type="evidence" value="ECO:0000318"/>
    <property type="project" value="GO_Central"/>
</dbReference>
<dbReference type="GO" id="GO:0016887">
    <property type="term" value="F:ATP hydrolysis activity"/>
    <property type="evidence" value="ECO:0007669"/>
    <property type="project" value="InterPro"/>
</dbReference>
<dbReference type="GO" id="GO:0042626">
    <property type="term" value="F:ATPase-coupled transmembrane transporter activity"/>
    <property type="evidence" value="ECO:0000318"/>
    <property type="project" value="GO_Central"/>
</dbReference>
<dbReference type="GO" id="GO:0006824">
    <property type="term" value="P:cobalt ion transport"/>
    <property type="evidence" value="ECO:0007669"/>
    <property type="project" value="InterPro"/>
</dbReference>
<dbReference type="CDD" id="cd03225">
    <property type="entry name" value="ABC_cobalt_CbiO_domain1"/>
    <property type="match status" value="1"/>
</dbReference>
<dbReference type="FunFam" id="3.40.50.300:FF:000224">
    <property type="entry name" value="Energy-coupling factor transporter ATP-binding protein EcfA"/>
    <property type="match status" value="1"/>
</dbReference>
<dbReference type="Gene3D" id="3.40.50.300">
    <property type="entry name" value="P-loop containing nucleotide triphosphate hydrolases"/>
    <property type="match status" value="1"/>
</dbReference>
<dbReference type="InterPro" id="IPR003593">
    <property type="entry name" value="AAA+_ATPase"/>
</dbReference>
<dbReference type="InterPro" id="IPR003439">
    <property type="entry name" value="ABC_transporter-like_ATP-bd"/>
</dbReference>
<dbReference type="InterPro" id="IPR017871">
    <property type="entry name" value="ABC_transporter-like_CS"/>
</dbReference>
<dbReference type="InterPro" id="IPR015856">
    <property type="entry name" value="ABC_transpr_CbiO/EcfA_su"/>
</dbReference>
<dbReference type="InterPro" id="IPR005876">
    <property type="entry name" value="Co_trans_ATP-bd"/>
</dbReference>
<dbReference type="InterPro" id="IPR050095">
    <property type="entry name" value="ECF_ABC_transporter_ATP-bd"/>
</dbReference>
<dbReference type="InterPro" id="IPR027417">
    <property type="entry name" value="P-loop_NTPase"/>
</dbReference>
<dbReference type="NCBIfam" id="TIGR01166">
    <property type="entry name" value="cbiO"/>
    <property type="match status" value="1"/>
</dbReference>
<dbReference type="PANTHER" id="PTHR43553:SF24">
    <property type="entry name" value="ENERGY-COUPLING FACTOR TRANSPORTER ATP-BINDING PROTEIN ECFA1"/>
    <property type="match status" value="1"/>
</dbReference>
<dbReference type="PANTHER" id="PTHR43553">
    <property type="entry name" value="HEAVY METAL TRANSPORTER"/>
    <property type="match status" value="1"/>
</dbReference>
<dbReference type="Pfam" id="PF00005">
    <property type="entry name" value="ABC_tran"/>
    <property type="match status" value="1"/>
</dbReference>
<dbReference type="SMART" id="SM00382">
    <property type="entry name" value="AAA"/>
    <property type="match status" value="1"/>
</dbReference>
<dbReference type="SUPFAM" id="SSF52540">
    <property type="entry name" value="P-loop containing nucleoside triphosphate hydrolases"/>
    <property type="match status" value="1"/>
</dbReference>
<dbReference type="PROSITE" id="PS00211">
    <property type="entry name" value="ABC_TRANSPORTER_1"/>
    <property type="match status" value="1"/>
</dbReference>
<dbReference type="PROSITE" id="PS50893">
    <property type="entry name" value="ABC_TRANSPORTER_2"/>
    <property type="match status" value="1"/>
</dbReference>
<gene>
    <name type="ordered locus">MA_4020</name>
</gene>
<name>Y4020_METAC</name>
<organism>
    <name type="scientific">Methanosarcina acetivorans (strain ATCC 35395 / DSM 2834 / JCM 12185 / C2A)</name>
    <dbReference type="NCBI Taxonomy" id="188937"/>
    <lineage>
        <taxon>Archaea</taxon>
        <taxon>Methanobacteriati</taxon>
        <taxon>Methanobacteriota</taxon>
        <taxon>Stenosarchaea group</taxon>
        <taxon>Methanomicrobia</taxon>
        <taxon>Methanosarcinales</taxon>
        <taxon>Methanosarcinaceae</taxon>
        <taxon>Methanosarcina</taxon>
    </lineage>
</organism>